<protein>
    <recommendedName>
        <fullName>Zinc finger protein 131</fullName>
    </recommendedName>
</protein>
<reference key="1">
    <citation type="submission" date="2004-11" db="EMBL/GenBank/DDBJ databases">
        <authorList>
            <consortium name="The German cDNA consortium"/>
        </authorList>
    </citation>
    <scope>NUCLEOTIDE SEQUENCE [LARGE SCALE MRNA]</scope>
    <source>
        <tissue>Brain cortex</tissue>
    </source>
</reference>
<gene>
    <name type="primary">ZNF131</name>
</gene>
<organism>
    <name type="scientific">Pongo abelii</name>
    <name type="common">Sumatran orangutan</name>
    <name type="synonym">Pongo pygmaeus abelii</name>
    <dbReference type="NCBI Taxonomy" id="9601"/>
    <lineage>
        <taxon>Eukaryota</taxon>
        <taxon>Metazoa</taxon>
        <taxon>Chordata</taxon>
        <taxon>Craniata</taxon>
        <taxon>Vertebrata</taxon>
        <taxon>Euteleostomi</taxon>
        <taxon>Mammalia</taxon>
        <taxon>Eutheria</taxon>
        <taxon>Euarchontoglires</taxon>
        <taxon>Primates</taxon>
        <taxon>Haplorrhini</taxon>
        <taxon>Catarrhini</taxon>
        <taxon>Hominidae</taxon>
        <taxon>Pongo</taxon>
    </lineage>
</organism>
<comment type="function">
    <text evidence="1">May be involved in transcriptional regulation as a repressor of ESR1/ER-alpha signaling. Plays a role during development and organogenesis as well as in the function of the adult central nervous system (By similarity).</text>
</comment>
<comment type="subcellular location">
    <subcellularLocation>
        <location evidence="1">Nucleus</location>
    </subcellularLocation>
</comment>
<comment type="PTM">
    <text evidence="1">Monosumoylated at Lys-567 by CBX4 and UHRF2. Sumoylation may potentiate ZNF131 inhibition of estrogen signaling. Sumoylation does not interfere with ubiquitination (By similarity).</text>
</comment>
<comment type="PTM">
    <text evidence="1">Ubiquitinated.</text>
</comment>
<comment type="similarity">
    <text evidence="6">Belongs to the krueppel C2H2-type zinc-finger protein family.</text>
</comment>
<feature type="chain" id="PRO_0000047415" description="Zinc finger protein 131">
    <location>
        <begin position="1"/>
        <end position="589"/>
    </location>
</feature>
<feature type="domain" description="BTB" evidence="3">
    <location>
        <begin position="34"/>
        <end position="98"/>
    </location>
</feature>
<feature type="zinc finger region" description="C2H2-type 1" evidence="4">
    <location>
        <begin position="254"/>
        <end position="277"/>
    </location>
</feature>
<feature type="zinc finger region" description="C2H2-type 2" evidence="4">
    <location>
        <begin position="294"/>
        <end position="316"/>
    </location>
</feature>
<feature type="zinc finger region" description="C2H2-type 3; degenerate" evidence="4">
    <location>
        <begin position="322"/>
        <end position="347"/>
    </location>
</feature>
<feature type="zinc finger region" description="C2H2-type 4" evidence="4">
    <location>
        <begin position="358"/>
        <end position="380"/>
    </location>
</feature>
<feature type="zinc finger region" description="C2H2-type 5" evidence="4">
    <location>
        <begin position="386"/>
        <end position="409"/>
    </location>
</feature>
<feature type="region of interest" description="Disordered" evidence="5">
    <location>
        <begin position="224"/>
        <end position="247"/>
    </location>
</feature>
<feature type="region of interest" description="Disordered" evidence="5">
    <location>
        <begin position="539"/>
        <end position="589"/>
    </location>
</feature>
<feature type="short sequence motif" description="Nuclear localization signal 1" evidence="1">
    <location>
        <begin position="137"/>
        <end position="148"/>
    </location>
</feature>
<feature type="short sequence motif" description="Nuclear localization signal 2" evidence="1">
    <location>
        <begin position="283"/>
        <end position="294"/>
    </location>
</feature>
<feature type="compositionally biased region" description="Basic and acidic residues" evidence="5">
    <location>
        <begin position="224"/>
        <end position="234"/>
    </location>
</feature>
<feature type="compositionally biased region" description="Basic and acidic residues" evidence="5">
    <location>
        <begin position="539"/>
        <end position="583"/>
    </location>
</feature>
<feature type="cross-link" description="Glycyl lysine isopeptide (Lys-Gly) (interchain with G-Cter in SUMO2)" evidence="2">
    <location>
        <position position="255"/>
    </location>
</feature>
<feature type="cross-link" description="Glycyl lysine isopeptide (Lys-Gly) (interchain with G-Cter in SUMO2)" evidence="2">
    <location>
        <position position="261"/>
    </location>
</feature>
<feature type="cross-link" description="Glycyl lysine isopeptide (Lys-Gly) (interchain with G-Cter in SUMO)" evidence="1">
    <location>
        <position position="567"/>
    </location>
</feature>
<name>ZN131_PONAB</name>
<accession>Q5RAU9</accession>
<sequence>MEAEETMECLQEFPEHHKMILDRLNEQREQDRFTDITLIVDGHHFKAHKAVLAACSKFFYKFFQEFTQEPLVEIEGVSKMAFRHLIEFTYTAKLMIQGEEEANDVWKAAEFLQMLEAIKALEVRNKENSAPLEENTTGKNEAKKRKIAETSNVITESLPSAESEPVEIEVEIAEGTIEVEDEGVETLEEVASAKQSVKYIQSTGSSDDSALALLADITSKYRQGDRKGQIKEDGCPSDPTSKQEHMKSHSTESFKCEICNKRYLRESAWKQHLNCYHLEEGGVSKKQRTGKKIHVCQYCEKQFDHFGHFKEHLRKHTGEKPFECPNCHERFARNSTLKCHLTACQTGVGAKKGRKKLYECQVCNSVFNSWDQFKDHLVIHTGDKPNHCTLCDLWFMQGNELRRHLSDAHNISERLVTEEVLSVETRVQTEPVTSMTIIEQVGKVHVLPLLQVQVDSAQVTVEQVHPDLLQGSQVHDSHMSELPEQVQVSYLEVGRIQTEEGTEVHVEELHVERVNQMPVEVQTELLEADLDHATPEIMNQEERESSQADAAEAAREDHEDAEDLETKPTVDSEAEKAENEDRTAMPVLE</sequence>
<evidence type="ECO:0000250" key="1"/>
<evidence type="ECO:0000250" key="2">
    <source>
        <dbReference type="UniProtKB" id="P52739"/>
    </source>
</evidence>
<evidence type="ECO:0000255" key="3">
    <source>
        <dbReference type="PROSITE-ProRule" id="PRU00037"/>
    </source>
</evidence>
<evidence type="ECO:0000255" key="4">
    <source>
        <dbReference type="PROSITE-ProRule" id="PRU00042"/>
    </source>
</evidence>
<evidence type="ECO:0000256" key="5">
    <source>
        <dbReference type="SAM" id="MobiDB-lite"/>
    </source>
</evidence>
<evidence type="ECO:0000305" key="6"/>
<dbReference type="EMBL" id="CR858913">
    <property type="protein sequence ID" value="CAH91111.1"/>
    <property type="molecule type" value="mRNA"/>
</dbReference>
<dbReference type="RefSeq" id="NP_001127377.1">
    <property type="nucleotide sequence ID" value="NM_001133905.1"/>
</dbReference>
<dbReference type="SMR" id="Q5RAU9"/>
<dbReference type="FunCoup" id="Q5RAU9">
    <property type="interactions" value="2810"/>
</dbReference>
<dbReference type="STRING" id="9601.ENSPPYP00000017249"/>
<dbReference type="GeneID" id="100174442"/>
<dbReference type="KEGG" id="pon:100174442"/>
<dbReference type="CTD" id="7690"/>
<dbReference type="eggNOG" id="KOG1721">
    <property type="taxonomic scope" value="Eukaryota"/>
</dbReference>
<dbReference type="InParanoid" id="Q5RAU9"/>
<dbReference type="OrthoDB" id="624345at2759"/>
<dbReference type="Proteomes" id="UP000001595">
    <property type="component" value="Unplaced"/>
</dbReference>
<dbReference type="GO" id="GO:0005634">
    <property type="term" value="C:nucleus"/>
    <property type="evidence" value="ECO:0007669"/>
    <property type="project" value="UniProtKB-SubCell"/>
</dbReference>
<dbReference type="GO" id="GO:0003677">
    <property type="term" value="F:DNA binding"/>
    <property type="evidence" value="ECO:0007669"/>
    <property type="project" value="UniProtKB-KW"/>
</dbReference>
<dbReference type="GO" id="GO:0000981">
    <property type="term" value="F:DNA-binding transcription factor activity, RNA polymerase II-specific"/>
    <property type="evidence" value="ECO:0007669"/>
    <property type="project" value="TreeGrafter"/>
</dbReference>
<dbReference type="GO" id="GO:0008270">
    <property type="term" value="F:zinc ion binding"/>
    <property type="evidence" value="ECO:0007669"/>
    <property type="project" value="UniProtKB-KW"/>
</dbReference>
<dbReference type="CDD" id="cd18221">
    <property type="entry name" value="BTB_POZ_ZBTB35_ZNF131"/>
    <property type="match status" value="1"/>
</dbReference>
<dbReference type="FunFam" id="3.30.160.60:FF:000498">
    <property type="entry name" value="Putative zinc finger protein 131"/>
    <property type="match status" value="1"/>
</dbReference>
<dbReference type="FunFam" id="3.30.160.60:FF:000539">
    <property type="entry name" value="Putative zinc finger protein 131"/>
    <property type="match status" value="1"/>
</dbReference>
<dbReference type="FunFam" id="3.30.160.60:FF:000552">
    <property type="entry name" value="Zinc finger protein 131"/>
    <property type="match status" value="1"/>
</dbReference>
<dbReference type="FunFam" id="3.30.710.10:FF:000041">
    <property type="entry name" value="Zinc finger protein 131"/>
    <property type="match status" value="1"/>
</dbReference>
<dbReference type="Gene3D" id="3.30.160.60">
    <property type="entry name" value="Classic Zinc Finger"/>
    <property type="match status" value="4"/>
</dbReference>
<dbReference type="Gene3D" id="3.30.710.10">
    <property type="entry name" value="Potassium Channel Kv1.1, Chain A"/>
    <property type="match status" value="1"/>
</dbReference>
<dbReference type="InterPro" id="IPR000210">
    <property type="entry name" value="BTB/POZ_dom"/>
</dbReference>
<dbReference type="InterPro" id="IPR011333">
    <property type="entry name" value="SKP1/BTB/POZ_sf"/>
</dbReference>
<dbReference type="InterPro" id="IPR036236">
    <property type="entry name" value="Znf_C2H2_sf"/>
</dbReference>
<dbReference type="InterPro" id="IPR013087">
    <property type="entry name" value="Znf_C2H2_type"/>
</dbReference>
<dbReference type="PANTHER" id="PTHR24394">
    <property type="entry name" value="ZINC FINGER PROTEIN"/>
    <property type="match status" value="1"/>
</dbReference>
<dbReference type="PANTHER" id="PTHR24394:SF55">
    <property type="entry name" value="ZINC FINGER PROTEIN 131"/>
    <property type="match status" value="1"/>
</dbReference>
<dbReference type="Pfam" id="PF00651">
    <property type="entry name" value="BTB"/>
    <property type="match status" value="1"/>
</dbReference>
<dbReference type="Pfam" id="PF12874">
    <property type="entry name" value="zf-met"/>
    <property type="match status" value="2"/>
</dbReference>
<dbReference type="SMART" id="SM00225">
    <property type="entry name" value="BTB"/>
    <property type="match status" value="1"/>
</dbReference>
<dbReference type="SMART" id="SM00355">
    <property type="entry name" value="ZnF_C2H2"/>
    <property type="match status" value="5"/>
</dbReference>
<dbReference type="SUPFAM" id="SSF57667">
    <property type="entry name" value="beta-beta-alpha zinc fingers"/>
    <property type="match status" value="3"/>
</dbReference>
<dbReference type="SUPFAM" id="SSF54695">
    <property type="entry name" value="POZ domain"/>
    <property type="match status" value="1"/>
</dbReference>
<dbReference type="PROSITE" id="PS50097">
    <property type="entry name" value="BTB"/>
    <property type="match status" value="1"/>
</dbReference>
<dbReference type="PROSITE" id="PS00028">
    <property type="entry name" value="ZINC_FINGER_C2H2_1"/>
    <property type="match status" value="4"/>
</dbReference>
<dbReference type="PROSITE" id="PS50157">
    <property type="entry name" value="ZINC_FINGER_C2H2_2"/>
    <property type="match status" value="4"/>
</dbReference>
<keyword id="KW-0238">DNA-binding</keyword>
<keyword id="KW-1017">Isopeptide bond</keyword>
<keyword id="KW-0479">Metal-binding</keyword>
<keyword id="KW-0539">Nucleus</keyword>
<keyword id="KW-1185">Reference proteome</keyword>
<keyword id="KW-0677">Repeat</keyword>
<keyword id="KW-0678">Repressor</keyword>
<keyword id="KW-0804">Transcription</keyword>
<keyword id="KW-0805">Transcription regulation</keyword>
<keyword id="KW-0832">Ubl conjugation</keyword>
<keyword id="KW-0862">Zinc</keyword>
<keyword id="KW-0863">Zinc-finger</keyword>
<proteinExistence type="evidence at transcript level"/>